<accession>B2SAF6</accession>
<protein>
    <recommendedName>
        <fullName evidence="1">3-isopropylmalate dehydratase small subunit</fullName>
        <ecNumber evidence="1">4.2.1.33</ecNumber>
    </recommendedName>
    <alternativeName>
        <fullName evidence="1">Alpha-IPM isomerase</fullName>
        <shortName evidence="1">IPMI</shortName>
    </alternativeName>
    <alternativeName>
        <fullName evidence="1">Isopropylmalate isomerase</fullName>
    </alternativeName>
</protein>
<feature type="chain" id="PRO_1000135793" description="3-isopropylmalate dehydratase small subunit">
    <location>
        <begin position="1"/>
        <end position="201"/>
    </location>
</feature>
<dbReference type="EC" id="4.2.1.33" evidence="1"/>
<dbReference type="EMBL" id="CP000888">
    <property type="protein sequence ID" value="ACD73843.1"/>
    <property type="molecule type" value="Genomic_DNA"/>
</dbReference>
<dbReference type="RefSeq" id="WP_002965763.1">
    <property type="nucleotide sequence ID" value="NC_010740.1"/>
</dbReference>
<dbReference type="SMR" id="B2SAF6"/>
<dbReference type="GeneID" id="97535045"/>
<dbReference type="KEGG" id="bmc:BAbS19_II03340"/>
<dbReference type="HOGENOM" id="CLU_081378_0_3_5"/>
<dbReference type="UniPathway" id="UPA00048">
    <property type="reaction ID" value="UER00071"/>
</dbReference>
<dbReference type="Proteomes" id="UP000002565">
    <property type="component" value="Chromosome 2"/>
</dbReference>
<dbReference type="GO" id="GO:0009316">
    <property type="term" value="C:3-isopropylmalate dehydratase complex"/>
    <property type="evidence" value="ECO:0007669"/>
    <property type="project" value="InterPro"/>
</dbReference>
<dbReference type="GO" id="GO:0003861">
    <property type="term" value="F:3-isopropylmalate dehydratase activity"/>
    <property type="evidence" value="ECO:0007669"/>
    <property type="project" value="UniProtKB-UniRule"/>
</dbReference>
<dbReference type="GO" id="GO:0009098">
    <property type="term" value="P:L-leucine biosynthetic process"/>
    <property type="evidence" value="ECO:0007669"/>
    <property type="project" value="UniProtKB-UniRule"/>
</dbReference>
<dbReference type="CDD" id="cd01577">
    <property type="entry name" value="IPMI_Swivel"/>
    <property type="match status" value="1"/>
</dbReference>
<dbReference type="FunFam" id="3.20.19.10:FF:000003">
    <property type="entry name" value="3-isopropylmalate dehydratase small subunit"/>
    <property type="match status" value="1"/>
</dbReference>
<dbReference type="Gene3D" id="3.20.19.10">
    <property type="entry name" value="Aconitase, domain 4"/>
    <property type="match status" value="1"/>
</dbReference>
<dbReference type="HAMAP" id="MF_01031">
    <property type="entry name" value="LeuD_type1"/>
    <property type="match status" value="1"/>
</dbReference>
<dbReference type="InterPro" id="IPR004431">
    <property type="entry name" value="3-IsopropMal_deHydase_ssu"/>
</dbReference>
<dbReference type="InterPro" id="IPR015928">
    <property type="entry name" value="Aconitase/3IPM_dehydase_swvl"/>
</dbReference>
<dbReference type="InterPro" id="IPR000573">
    <property type="entry name" value="AconitaseA/IPMdHydase_ssu_swvl"/>
</dbReference>
<dbReference type="InterPro" id="IPR033940">
    <property type="entry name" value="IPMI_Swivel"/>
</dbReference>
<dbReference type="InterPro" id="IPR050075">
    <property type="entry name" value="LeuD"/>
</dbReference>
<dbReference type="NCBIfam" id="TIGR00171">
    <property type="entry name" value="leuD"/>
    <property type="match status" value="1"/>
</dbReference>
<dbReference type="NCBIfam" id="NF002458">
    <property type="entry name" value="PRK01641.1"/>
    <property type="match status" value="1"/>
</dbReference>
<dbReference type="PANTHER" id="PTHR43345:SF5">
    <property type="entry name" value="3-ISOPROPYLMALATE DEHYDRATASE SMALL SUBUNIT"/>
    <property type="match status" value="1"/>
</dbReference>
<dbReference type="PANTHER" id="PTHR43345">
    <property type="entry name" value="3-ISOPROPYLMALATE DEHYDRATASE SMALL SUBUNIT 2-RELATED-RELATED"/>
    <property type="match status" value="1"/>
</dbReference>
<dbReference type="Pfam" id="PF00694">
    <property type="entry name" value="Aconitase_C"/>
    <property type="match status" value="1"/>
</dbReference>
<dbReference type="SUPFAM" id="SSF52016">
    <property type="entry name" value="LeuD/IlvD-like"/>
    <property type="match status" value="1"/>
</dbReference>
<sequence>MDKFTKLTGVAAPLPIVNIDTDMIIPKDYLKTIKRTGLGKGLFAEMRFNEDGSENPDFVLNKPGYRKAQILVAGDNFGCGSSREHAPWALLDYGIRCVISTSFADIFYNNCFKNGILPIKVAQEDLDKLMDDASRGANATLTIDLETKQIHGPDGGTISFDLDDFKRHCLLNGLDDIGLTMEKAKSIDTFEAKNAEERPWA</sequence>
<name>LEUD_BRUA1</name>
<evidence type="ECO:0000255" key="1">
    <source>
        <dbReference type="HAMAP-Rule" id="MF_01031"/>
    </source>
</evidence>
<organism>
    <name type="scientific">Brucella abortus (strain S19)</name>
    <dbReference type="NCBI Taxonomy" id="430066"/>
    <lineage>
        <taxon>Bacteria</taxon>
        <taxon>Pseudomonadati</taxon>
        <taxon>Pseudomonadota</taxon>
        <taxon>Alphaproteobacteria</taxon>
        <taxon>Hyphomicrobiales</taxon>
        <taxon>Brucellaceae</taxon>
        <taxon>Brucella/Ochrobactrum group</taxon>
        <taxon>Brucella</taxon>
    </lineage>
</organism>
<keyword id="KW-0028">Amino-acid biosynthesis</keyword>
<keyword id="KW-0100">Branched-chain amino acid biosynthesis</keyword>
<keyword id="KW-0432">Leucine biosynthesis</keyword>
<keyword id="KW-0456">Lyase</keyword>
<proteinExistence type="inferred from homology"/>
<reference key="1">
    <citation type="journal article" date="2008" name="PLoS ONE">
        <title>Genome sequence of Brucella abortus vaccine strain S19 compared to virulent strains yields candidate virulence genes.</title>
        <authorList>
            <person name="Crasta O.R."/>
            <person name="Folkerts O."/>
            <person name="Fei Z."/>
            <person name="Mane S.P."/>
            <person name="Evans C."/>
            <person name="Martino-Catt S."/>
            <person name="Bricker B."/>
            <person name="Yu G."/>
            <person name="Du L."/>
            <person name="Sobral B.W."/>
        </authorList>
    </citation>
    <scope>NUCLEOTIDE SEQUENCE [LARGE SCALE GENOMIC DNA]</scope>
    <source>
        <strain>S19</strain>
    </source>
</reference>
<comment type="function">
    <text evidence="1">Catalyzes the isomerization between 2-isopropylmalate and 3-isopropylmalate, via the formation of 2-isopropylmaleate.</text>
</comment>
<comment type="catalytic activity">
    <reaction evidence="1">
        <text>(2R,3S)-3-isopropylmalate = (2S)-2-isopropylmalate</text>
        <dbReference type="Rhea" id="RHEA:32287"/>
        <dbReference type="ChEBI" id="CHEBI:1178"/>
        <dbReference type="ChEBI" id="CHEBI:35121"/>
        <dbReference type="EC" id="4.2.1.33"/>
    </reaction>
</comment>
<comment type="pathway">
    <text evidence="1">Amino-acid biosynthesis; L-leucine biosynthesis; L-leucine from 3-methyl-2-oxobutanoate: step 2/4.</text>
</comment>
<comment type="subunit">
    <text evidence="1">Heterodimer of LeuC and LeuD.</text>
</comment>
<comment type="similarity">
    <text evidence="1">Belongs to the LeuD family. LeuD type 1 subfamily.</text>
</comment>
<gene>
    <name evidence="1" type="primary">leuD</name>
    <name type="ordered locus">BAbS19_II03340</name>
</gene>